<gene>
    <name type="primary">comS</name>
    <name type="ordered locus">BSU03500</name>
</gene>
<reference key="1">
    <citation type="journal article" date="1995" name="Mol. Microbiol.">
        <title>A small gene, designated comS, located within the coding region of the fourth amino acid-activation domain of srfA, is required for competence development in Bacillus subtilis.</title>
        <authorList>
            <person name="Hamoen L.W."/>
            <person name="Eshuis H."/>
            <person name="Jongbloed J."/>
            <person name="Venema G."/>
            <person name="van Sinderen D."/>
        </authorList>
    </citation>
    <scope>NUCLEOTIDE SEQUENCE [GENOMIC DNA]</scope>
    <scope>CHARACTERIZATION</scope>
    <source>
        <strain>168 / 8G5</strain>
    </source>
</reference>
<reference key="2">
    <citation type="journal article" date="1994" name="Proc. Natl. Acad. Sci. U.S.A.">
        <title>Identification of comS, a gene of the srfA operon that regulates the establishment of genetic competence in Bacillus subtilis.</title>
        <authorList>
            <person name="D'Souza C."/>
            <person name="Nakano M.M."/>
            <person name="Zuber P."/>
        </authorList>
    </citation>
    <scope>NUCLEOTIDE SEQUENCE [GENOMIC DNA]</scope>
    <scope>CHARACTERIZATION</scope>
    <source>
        <strain>168</strain>
    </source>
</reference>
<reference key="3">
    <citation type="journal article" date="1995" name="Proc. Natl. Acad. Sci. U.S.A.">
        <authorList>
            <person name="D'Souza C."/>
            <person name="Nakano M.M."/>
            <person name="Zuber P."/>
        </authorList>
    </citation>
    <scope>ERRATUM OF PUBMED:7937777</scope>
</reference>
<reference key="4">
    <citation type="journal article" date="1993" name="Nucleic Acids Res.">
        <title>Nucleotide sequence of 5' portion of srfA that contains the region required for competence establishment in Bacillus subtilis.</title>
        <authorList>
            <person name="Fuma S."/>
            <person name="Fujishima Y."/>
            <person name="Corbell N."/>
            <person name="D'Souza C."/>
            <person name="Nakano M.M."/>
            <person name="Zuber P."/>
            <person name="Yamane K."/>
        </authorList>
    </citation>
    <scope>NUCLEOTIDE SEQUENCE [GENOMIC DNA]</scope>
    <source>
        <strain>168</strain>
    </source>
</reference>
<reference key="5">
    <citation type="journal article" date="1993" name="Mol. Microbiol.">
        <title>Sequence and analysis of the genetic locus responsible for surfactin synthesis in Bacillus subtilis.</title>
        <authorList>
            <person name="Cosmina P."/>
            <person name="Rodriguez F."/>
            <person name="de Ferra F."/>
            <person name="Grandi G."/>
            <person name="Perego M."/>
            <person name="Venema G."/>
            <person name="van Sinderen D."/>
        </authorList>
    </citation>
    <scope>NUCLEOTIDE SEQUENCE [GENOMIC DNA]</scope>
    <source>
        <strain>168 / JH642</strain>
    </source>
</reference>
<reference key="6">
    <citation type="journal article" date="1996" name="Microbiology">
        <title>The 25 degrees-36 degrees region of the Bacillus subtilis chromosome: determination of the sequence of a 146 kb segment and identification of 113 genes.</title>
        <authorList>
            <person name="Yamane K."/>
            <person name="Kumano M."/>
            <person name="Kurita K."/>
        </authorList>
    </citation>
    <scope>NUCLEOTIDE SEQUENCE [GENOMIC DNA]</scope>
    <source>
        <strain>168</strain>
    </source>
</reference>
<reference key="7">
    <citation type="journal article" date="1997" name="Nature">
        <title>The complete genome sequence of the Gram-positive bacterium Bacillus subtilis.</title>
        <authorList>
            <person name="Kunst F."/>
            <person name="Ogasawara N."/>
            <person name="Moszer I."/>
            <person name="Albertini A.M."/>
            <person name="Alloni G."/>
            <person name="Azevedo V."/>
            <person name="Bertero M.G."/>
            <person name="Bessieres P."/>
            <person name="Bolotin A."/>
            <person name="Borchert S."/>
            <person name="Borriss R."/>
            <person name="Boursier L."/>
            <person name="Brans A."/>
            <person name="Braun M."/>
            <person name="Brignell S.C."/>
            <person name="Bron S."/>
            <person name="Brouillet S."/>
            <person name="Bruschi C.V."/>
            <person name="Caldwell B."/>
            <person name="Capuano V."/>
            <person name="Carter N.M."/>
            <person name="Choi S.-K."/>
            <person name="Codani J.-J."/>
            <person name="Connerton I.F."/>
            <person name="Cummings N.J."/>
            <person name="Daniel R.A."/>
            <person name="Denizot F."/>
            <person name="Devine K.M."/>
            <person name="Duesterhoeft A."/>
            <person name="Ehrlich S.D."/>
            <person name="Emmerson P.T."/>
            <person name="Entian K.-D."/>
            <person name="Errington J."/>
            <person name="Fabret C."/>
            <person name="Ferrari E."/>
            <person name="Foulger D."/>
            <person name="Fritz C."/>
            <person name="Fujita M."/>
            <person name="Fujita Y."/>
            <person name="Fuma S."/>
            <person name="Galizzi A."/>
            <person name="Galleron N."/>
            <person name="Ghim S.-Y."/>
            <person name="Glaser P."/>
            <person name="Goffeau A."/>
            <person name="Golightly E.J."/>
            <person name="Grandi G."/>
            <person name="Guiseppi G."/>
            <person name="Guy B.J."/>
            <person name="Haga K."/>
            <person name="Haiech J."/>
            <person name="Harwood C.R."/>
            <person name="Henaut A."/>
            <person name="Hilbert H."/>
            <person name="Holsappel S."/>
            <person name="Hosono S."/>
            <person name="Hullo M.-F."/>
            <person name="Itaya M."/>
            <person name="Jones L.-M."/>
            <person name="Joris B."/>
            <person name="Karamata D."/>
            <person name="Kasahara Y."/>
            <person name="Klaerr-Blanchard M."/>
            <person name="Klein C."/>
            <person name="Kobayashi Y."/>
            <person name="Koetter P."/>
            <person name="Koningstein G."/>
            <person name="Krogh S."/>
            <person name="Kumano M."/>
            <person name="Kurita K."/>
            <person name="Lapidus A."/>
            <person name="Lardinois S."/>
            <person name="Lauber J."/>
            <person name="Lazarevic V."/>
            <person name="Lee S.-M."/>
            <person name="Levine A."/>
            <person name="Liu H."/>
            <person name="Masuda S."/>
            <person name="Mauel C."/>
            <person name="Medigue C."/>
            <person name="Medina N."/>
            <person name="Mellado R.P."/>
            <person name="Mizuno M."/>
            <person name="Moestl D."/>
            <person name="Nakai S."/>
            <person name="Noback M."/>
            <person name="Noone D."/>
            <person name="O'Reilly M."/>
            <person name="Ogawa K."/>
            <person name="Ogiwara A."/>
            <person name="Oudega B."/>
            <person name="Park S.-H."/>
            <person name="Parro V."/>
            <person name="Pohl T.M."/>
            <person name="Portetelle D."/>
            <person name="Porwollik S."/>
            <person name="Prescott A.M."/>
            <person name="Presecan E."/>
            <person name="Pujic P."/>
            <person name="Purnelle B."/>
            <person name="Rapoport G."/>
            <person name="Rey M."/>
            <person name="Reynolds S."/>
            <person name="Rieger M."/>
            <person name="Rivolta C."/>
            <person name="Rocha E."/>
            <person name="Roche B."/>
            <person name="Rose M."/>
            <person name="Sadaie Y."/>
            <person name="Sato T."/>
            <person name="Scanlan E."/>
            <person name="Schleich S."/>
            <person name="Schroeter R."/>
            <person name="Scoffone F."/>
            <person name="Sekiguchi J."/>
            <person name="Sekowska A."/>
            <person name="Seror S.J."/>
            <person name="Serror P."/>
            <person name="Shin B.-S."/>
            <person name="Soldo B."/>
            <person name="Sorokin A."/>
            <person name="Tacconi E."/>
            <person name="Takagi T."/>
            <person name="Takahashi H."/>
            <person name="Takemaru K."/>
            <person name="Takeuchi M."/>
            <person name="Tamakoshi A."/>
            <person name="Tanaka T."/>
            <person name="Terpstra P."/>
            <person name="Tognoni A."/>
            <person name="Tosato V."/>
            <person name="Uchiyama S."/>
            <person name="Vandenbol M."/>
            <person name="Vannier F."/>
            <person name="Vassarotti A."/>
            <person name="Viari A."/>
            <person name="Wambutt R."/>
            <person name="Wedler E."/>
            <person name="Wedler H."/>
            <person name="Weitzenegger T."/>
            <person name="Winters P."/>
            <person name="Wipat A."/>
            <person name="Yamamoto H."/>
            <person name="Yamane K."/>
            <person name="Yasumoto K."/>
            <person name="Yata K."/>
            <person name="Yoshida K."/>
            <person name="Yoshikawa H.-F."/>
            <person name="Zumstein E."/>
            <person name="Yoshikawa H."/>
            <person name="Danchin A."/>
        </authorList>
    </citation>
    <scope>NUCLEOTIDE SEQUENCE [LARGE SCALE GENOMIC DNA]</scope>
    <source>
        <strain>168</strain>
    </source>
</reference>
<keyword id="KW-0178">Competence</keyword>
<keyword id="KW-1185">Reference proteome</keyword>
<proteinExistence type="evidence at protein level"/>
<organism>
    <name type="scientific">Bacillus subtilis (strain 168)</name>
    <dbReference type="NCBI Taxonomy" id="224308"/>
    <lineage>
        <taxon>Bacteria</taxon>
        <taxon>Bacillati</taxon>
        <taxon>Bacillota</taxon>
        <taxon>Bacilli</taxon>
        <taxon>Bacillales</taxon>
        <taxon>Bacillaceae</taxon>
        <taxon>Bacillus</taxon>
    </lineage>
</organism>
<name>COMS_BACSU</name>
<dbReference type="EMBL" id="U10926">
    <property type="protein sequence ID" value="AAA61567.1"/>
    <property type="molecule type" value="Genomic_DNA"/>
</dbReference>
<dbReference type="EMBL" id="D13262">
    <property type="status" value="NOT_ANNOTATED_CDS"/>
    <property type="molecule type" value="Genomic_DNA"/>
</dbReference>
<dbReference type="EMBL" id="X70356">
    <property type="status" value="NOT_ANNOTATED_CDS"/>
    <property type="molecule type" value="Genomic_DNA"/>
</dbReference>
<dbReference type="EMBL" id="X72672">
    <property type="status" value="NOT_ANNOTATED_CDS"/>
    <property type="molecule type" value="Genomic_DNA"/>
</dbReference>
<dbReference type="EMBL" id="D50453">
    <property type="protein sequence ID" value="BAA08984.1"/>
    <property type="molecule type" value="Genomic_DNA"/>
</dbReference>
<dbReference type="EMBL" id="AL009126">
    <property type="protein sequence ID" value="CAB12144.1"/>
    <property type="molecule type" value="Genomic_DNA"/>
</dbReference>
<dbReference type="PIR" id="S65598">
    <property type="entry name" value="S65598"/>
</dbReference>
<dbReference type="RefSeq" id="NP_388232.1">
    <property type="nucleotide sequence ID" value="NC_000964.3"/>
</dbReference>
<dbReference type="RefSeq" id="WP_010886404.1">
    <property type="nucleotide sequence ID" value="NZ_OZ025638.1"/>
</dbReference>
<dbReference type="FunCoup" id="P80355">
    <property type="interactions" value="176"/>
</dbReference>
<dbReference type="STRING" id="224308.BSU03500"/>
<dbReference type="PaxDb" id="224308-BSU03500"/>
<dbReference type="EnsemblBacteria" id="CAB12144">
    <property type="protein sequence ID" value="CAB12144"/>
    <property type="gene ID" value="BSU_03500"/>
</dbReference>
<dbReference type="GeneID" id="86875229"/>
<dbReference type="GeneID" id="938310"/>
<dbReference type="KEGG" id="bsu:BSU03500"/>
<dbReference type="InParanoid" id="P80355"/>
<dbReference type="BioCyc" id="BSUB:BSU03500-MONOMER"/>
<dbReference type="Proteomes" id="UP000001570">
    <property type="component" value="Chromosome"/>
</dbReference>
<dbReference type="GO" id="GO:0030420">
    <property type="term" value="P:establishment of competence for transformation"/>
    <property type="evidence" value="ECO:0007669"/>
    <property type="project" value="UniProtKB-KW"/>
</dbReference>
<dbReference type="InterPro" id="IPR035139">
    <property type="entry name" value="ComS"/>
</dbReference>
<dbReference type="Pfam" id="PF17584">
    <property type="entry name" value="ComS"/>
    <property type="match status" value="1"/>
</dbReference>
<sequence>MNRSGKHLISSIILYPRPSGECISSISLDKQTQATTSPLYFCWREK</sequence>
<feature type="chain" id="PRO_0000090015" description="Competence protein S">
    <location>
        <begin position="1"/>
        <end position="46"/>
    </location>
</feature>
<comment type="function">
    <text>Required for the development of competence.</text>
</comment>
<protein>
    <recommendedName>
        <fullName>Competence protein S</fullName>
    </recommendedName>
</protein>
<accession>P80355</accession>